<keyword id="KW-0963">Cytoplasm</keyword>
<keyword id="KW-0251">Elongation factor</keyword>
<keyword id="KW-0648">Protein biosynthesis</keyword>
<keyword id="KW-1185">Reference proteome</keyword>
<comment type="function">
    <text evidence="1">Involved in peptide bond synthesis. Stimulates efficient translation and peptide-bond synthesis on native or reconstituted 70S ribosomes in vitro. Probably functions indirectly by altering the affinity of the ribosome for aminoacyl-tRNA, thus increasing their reactivity as acceptors for peptidyl transferase.</text>
</comment>
<comment type="pathway">
    <text evidence="1">Protein biosynthesis; polypeptide chain elongation.</text>
</comment>
<comment type="subcellular location">
    <subcellularLocation>
        <location evidence="1">Cytoplasm</location>
    </subcellularLocation>
</comment>
<comment type="similarity">
    <text evidence="1">Belongs to the elongation factor P family.</text>
</comment>
<evidence type="ECO:0000255" key="1">
    <source>
        <dbReference type="HAMAP-Rule" id="MF_00141"/>
    </source>
</evidence>
<name>EFP_CLOPE</name>
<feature type="chain" id="PRO_0000094236" description="Elongation factor P">
    <location>
        <begin position="1"/>
        <end position="185"/>
    </location>
</feature>
<dbReference type="EMBL" id="BA000016">
    <property type="protein sequence ID" value="BAB81541.1"/>
    <property type="molecule type" value="Genomic_DNA"/>
</dbReference>
<dbReference type="RefSeq" id="WP_003451649.1">
    <property type="nucleotide sequence ID" value="NC_003366.1"/>
</dbReference>
<dbReference type="SMR" id="Q8XJC5"/>
<dbReference type="STRING" id="195102.gene:10491099"/>
<dbReference type="GeneID" id="93001630"/>
<dbReference type="KEGG" id="cpe:CPE1835"/>
<dbReference type="HOGENOM" id="CLU_074944_0_1_9"/>
<dbReference type="UniPathway" id="UPA00345"/>
<dbReference type="Proteomes" id="UP000000818">
    <property type="component" value="Chromosome"/>
</dbReference>
<dbReference type="GO" id="GO:0005737">
    <property type="term" value="C:cytoplasm"/>
    <property type="evidence" value="ECO:0007669"/>
    <property type="project" value="UniProtKB-SubCell"/>
</dbReference>
<dbReference type="GO" id="GO:0003746">
    <property type="term" value="F:translation elongation factor activity"/>
    <property type="evidence" value="ECO:0007669"/>
    <property type="project" value="UniProtKB-UniRule"/>
</dbReference>
<dbReference type="GO" id="GO:0043043">
    <property type="term" value="P:peptide biosynthetic process"/>
    <property type="evidence" value="ECO:0007669"/>
    <property type="project" value="InterPro"/>
</dbReference>
<dbReference type="CDD" id="cd04470">
    <property type="entry name" value="S1_EF-P_repeat_1"/>
    <property type="match status" value="1"/>
</dbReference>
<dbReference type="CDD" id="cd05794">
    <property type="entry name" value="S1_EF-P_repeat_2"/>
    <property type="match status" value="1"/>
</dbReference>
<dbReference type="FunFam" id="2.30.30.30:FF:000003">
    <property type="entry name" value="Elongation factor P"/>
    <property type="match status" value="1"/>
</dbReference>
<dbReference type="FunFam" id="2.40.50.140:FF:000004">
    <property type="entry name" value="Elongation factor P"/>
    <property type="match status" value="1"/>
</dbReference>
<dbReference type="FunFam" id="2.40.50.140:FF:000009">
    <property type="entry name" value="Elongation factor P"/>
    <property type="match status" value="1"/>
</dbReference>
<dbReference type="Gene3D" id="2.30.30.30">
    <property type="match status" value="1"/>
</dbReference>
<dbReference type="Gene3D" id="2.40.50.140">
    <property type="entry name" value="Nucleic acid-binding proteins"/>
    <property type="match status" value="2"/>
</dbReference>
<dbReference type="HAMAP" id="MF_00141">
    <property type="entry name" value="EF_P"/>
    <property type="match status" value="1"/>
</dbReference>
<dbReference type="InterPro" id="IPR015365">
    <property type="entry name" value="Elong-fact-P_C"/>
</dbReference>
<dbReference type="InterPro" id="IPR012340">
    <property type="entry name" value="NA-bd_OB-fold"/>
</dbReference>
<dbReference type="InterPro" id="IPR014722">
    <property type="entry name" value="Rib_uL2_dom2"/>
</dbReference>
<dbReference type="InterPro" id="IPR020599">
    <property type="entry name" value="Transl_elong_fac_P/YeiP"/>
</dbReference>
<dbReference type="InterPro" id="IPR013185">
    <property type="entry name" value="Transl_elong_KOW-like"/>
</dbReference>
<dbReference type="InterPro" id="IPR001059">
    <property type="entry name" value="Transl_elong_P/YeiP_cen"/>
</dbReference>
<dbReference type="InterPro" id="IPR013852">
    <property type="entry name" value="Transl_elong_P/YeiP_CS"/>
</dbReference>
<dbReference type="InterPro" id="IPR011768">
    <property type="entry name" value="Transl_elongation_fac_P"/>
</dbReference>
<dbReference type="InterPro" id="IPR008991">
    <property type="entry name" value="Translation_prot_SH3-like_sf"/>
</dbReference>
<dbReference type="NCBIfam" id="TIGR00038">
    <property type="entry name" value="efp"/>
    <property type="match status" value="1"/>
</dbReference>
<dbReference type="NCBIfam" id="NF001810">
    <property type="entry name" value="PRK00529.1"/>
    <property type="match status" value="1"/>
</dbReference>
<dbReference type="PANTHER" id="PTHR30053">
    <property type="entry name" value="ELONGATION FACTOR P"/>
    <property type="match status" value="1"/>
</dbReference>
<dbReference type="PANTHER" id="PTHR30053:SF12">
    <property type="entry name" value="ELONGATION FACTOR P (EF-P) FAMILY PROTEIN"/>
    <property type="match status" value="1"/>
</dbReference>
<dbReference type="Pfam" id="PF01132">
    <property type="entry name" value="EFP"/>
    <property type="match status" value="1"/>
</dbReference>
<dbReference type="Pfam" id="PF08207">
    <property type="entry name" value="EFP_N"/>
    <property type="match status" value="1"/>
</dbReference>
<dbReference type="Pfam" id="PF09285">
    <property type="entry name" value="Elong-fact-P_C"/>
    <property type="match status" value="1"/>
</dbReference>
<dbReference type="PIRSF" id="PIRSF005901">
    <property type="entry name" value="EF-P"/>
    <property type="match status" value="1"/>
</dbReference>
<dbReference type="SMART" id="SM01185">
    <property type="entry name" value="EFP"/>
    <property type="match status" value="1"/>
</dbReference>
<dbReference type="SMART" id="SM00841">
    <property type="entry name" value="Elong-fact-P_C"/>
    <property type="match status" value="1"/>
</dbReference>
<dbReference type="SUPFAM" id="SSF50249">
    <property type="entry name" value="Nucleic acid-binding proteins"/>
    <property type="match status" value="2"/>
</dbReference>
<dbReference type="SUPFAM" id="SSF50104">
    <property type="entry name" value="Translation proteins SH3-like domain"/>
    <property type="match status" value="1"/>
</dbReference>
<dbReference type="PROSITE" id="PS01275">
    <property type="entry name" value="EFP"/>
    <property type="match status" value="1"/>
</dbReference>
<reference key="1">
    <citation type="journal article" date="2002" name="Proc. Natl. Acad. Sci. U.S.A.">
        <title>Complete genome sequence of Clostridium perfringens, an anaerobic flesh-eater.</title>
        <authorList>
            <person name="Shimizu T."/>
            <person name="Ohtani K."/>
            <person name="Hirakawa H."/>
            <person name="Ohshima K."/>
            <person name="Yamashita A."/>
            <person name="Shiba T."/>
            <person name="Ogasawara N."/>
            <person name="Hattori M."/>
            <person name="Kuhara S."/>
            <person name="Hayashi H."/>
        </authorList>
    </citation>
    <scope>NUCLEOTIDE SEQUENCE [LARGE SCALE GENOMIC DNA]</scope>
    <source>
        <strain>13 / Type A</strain>
    </source>
</reference>
<proteinExistence type="inferred from homology"/>
<gene>
    <name evidence="1" type="primary">efp</name>
    <name type="ordered locus">CPE1835</name>
</gene>
<sequence length="185" mass="20961">MISGSDLRKGTTFELDGQVYTVIDFLHVKPGKGAAFVRTKLRNVIMGGVTDRTFNPTDKLQEAIIERKEMQYLYSDGELYYFMDQETFEQIPLNHEKVEDAIKFLKENMNAVIKFYKGEAFSVEAPNFVELLITECEPSVKGNTATTAMKTAVVETGATVMVPMFVEEGNTIRIDTRTGEYMERV</sequence>
<protein>
    <recommendedName>
        <fullName evidence="1">Elongation factor P</fullName>
        <shortName evidence="1">EF-P</shortName>
    </recommendedName>
</protein>
<accession>Q8XJC5</accession>
<organism>
    <name type="scientific">Clostridium perfringens (strain 13 / Type A)</name>
    <dbReference type="NCBI Taxonomy" id="195102"/>
    <lineage>
        <taxon>Bacteria</taxon>
        <taxon>Bacillati</taxon>
        <taxon>Bacillota</taxon>
        <taxon>Clostridia</taxon>
        <taxon>Eubacteriales</taxon>
        <taxon>Clostridiaceae</taxon>
        <taxon>Clostridium</taxon>
    </lineage>
</organism>